<name>VDTB1_BYSSP</name>
<feature type="signal peptide" evidence="2">
    <location>
        <begin position="1"/>
        <end position="17"/>
    </location>
</feature>
<feature type="chain" id="PRO_5019211757" description="Multicopper oxidase VdtB">
    <location>
        <begin position="18"/>
        <end position="685"/>
    </location>
</feature>
<feature type="transmembrane region" description="Helical" evidence="2">
    <location>
        <begin position="627"/>
        <end position="647"/>
    </location>
</feature>
<feature type="domain" description="Plastocyanin-like 1" evidence="2">
    <location>
        <begin position="26"/>
        <end position="139"/>
    </location>
</feature>
<feature type="domain" description="Plastocyanin-like 2" evidence="2">
    <location>
        <begin position="168"/>
        <end position="368"/>
    </location>
</feature>
<feature type="domain" description="Plastocyanin-like 3" evidence="2">
    <location>
        <begin position="466"/>
        <end position="585"/>
    </location>
</feature>
<feature type="binding site" evidence="1">
    <location>
        <position position="75"/>
    </location>
    <ligand>
        <name>Cu cation</name>
        <dbReference type="ChEBI" id="CHEBI:23378"/>
        <label>1</label>
    </ligand>
</feature>
<feature type="binding site" evidence="1">
    <location>
        <position position="77"/>
    </location>
    <ligand>
        <name>Cu cation</name>
        <dbReference type="ChEBI" id="CHEBI:23378"/>
        <label>2</label>
    </ligand>
</feature>
<feature type="binding site" evidence="1">
    <location>
        <position position="119"/>
    </location>
    <ligand>
        <name>Cu cation</name>
        <dbReference type="ChEBI" id="CHEBI:23378"/>
        <label>2</label>
    </ligand>
</feature>
<feature type="binding site" evidence="1">
    <location>
        <position position="121"/>
    </location>
    <ligand>
        <name>Cu cation</name>
        <dbReference type="ChEBI" id="CHEBI:23378"/>
        <label>3</label>
    </ligand>
</feature>
<feature type="binding site" evidence="1">
    <location>
        <position position="500"/>
    </location>
    <ligand>
        <name>Cu cation</name>
        <dbReference type="ChEBI" id="CHEBI:23378"/>
        <label>4</label>
    </ligand>
</feature>
<feature type="glycosylation site" description="N-linked (GlcNAc...) asparagine" evidence="3">
    <location>
        <position position="71"/>
    </location>
</feature>
<feature type="glycosylation site" description="N-linked (GlcNAc...) asparagine" evidence="3">
    <location>
        <position position="178"/>
    </location>
</feature>
<feature type="glycosylation site" description="N-linked (GlcNAc...) asparagine" evidence="3">
    <location>
        <position position="229"/>
    </location>
</feature>
<feature type="glycosylation site" description="N-linked (GlcNAc...) asparagine" evidence="3">
    <location>
        <position position="253"/>
    </location>
</feature>
<feature type="glycosylation site" description="N-linked (GlcNAc...) asparagine" evidence="3">
    <location>
        <position position="432"/>
    </location>
</feature>
<feature type="glycosylation site" description="N-linked (GlcNAc...) asparagine" evidence="3">
    <location>
        <position position="475"/>
    </location>
</feature>
<feature type="glycosylation site" description="N-linked (GlcNAc...) asparagine" evidence="3">
    <location>
        <position position="517"/>
    </location>
</feature>
<keyword id="KW-0186">Copper</keyword>
<keyword id="KW-0325">Glycoprotein</keyword>
<keyword id="KW-0472">Membrane</keyword>
<keyword id="KW-0479">Metal-binding</keyword>
<keyword id="KW-0560">Oxidoreductase</keyword>
<keyword id="KW-1185">Reference proteome</keyword>
<keyword id="KW-0677">Repeat</keyword>
<keyword id="KW-0732">Signal</keyword>
<keyword id="KW-0812">Transmembrane</keyword>
<keyword id="KW-1133">Transmembrane helix</keyword>
<evidence type="ECO:0000250" key="1">
    <source>
        <dbReference type="UniProtKB" id="Q70KY3"/>
    </source>
</evidence>
<evidence type="ECO:0000255" key="2"/>
<evidence type="ECO:0000255" key="3">
    <source>
        <dbReference type="PROSITE-ProRule" id="PRU00498"/>
    </source>
</evidence>
<evidence type="ECO:0000269" key="4">
    <source>
    </source>
</evidence>
<evidence type="ECO:0000269" key="5">
    <source>
    </source>
</evidence>
<evidence type="ECO:0000303" key="6">
    <source>
    </source>
</evidence>
<evidence type="ECO:0000305" key="7"/>
<reference key="1">
    <citation type="journal article" date="2018" name="Front. Microbiol.">
        <title>Genomic and genetic insights into a cosmopolitan fungus, Paecilomyces variotii (Eurotiales).</title>
        <authorList>
            <person name="Urquhart A.S."/>
            <person name="Mondo S.J."/>
            <person name="Maekelae M.R."/>
            <person name="Hane J.K."/>
            <person name="Wiebenga A."/>
            <person name="He G."/>
            <person name="Mihaltcheva S."/>
            <person name="Pangilinan J."/>
            <person name="Lipzen A."/>
            <person name="Barry K."/>
            <person name="de Vries R.P."/>
            <person name="Grigoriev I.V."/>
            <person name="Idnurm A."/>
        </authorList>
    </citation>
    <scope>NUCLEOTIDE SEQUENCE [LARGE SCALE GENOMIC DNA]</scope>
    <source>
        <strain>ATCC 90900 / JCM 12815 / CBS 101075</strain>
    </source>
</reference>
<reference key="2">
    <citation type="journal article" date="2019" name="Fungal Biol. Biotechnol.">
        <title>The fungal gene cluster for biosynthesis of the antibacterial agent viriditoxin.</title>
        <authorList>
            <person name="Urquhart A.S."/>
            <person name="Hu J."/>
            <person name="Chooi Y.H."/>
            <person name="Idnurm A."/>
        </authorList>
    </citation>
    <scope>IDENTIFICATION</scope>
    <scope>FUNCTION</scope>
    <scope>DISRUPTION PHENOTYPE</scope>
    <scope>PATHWAY</scope>
</reference>
<reference key="3">
    <citation type="journal article" date="2019" name="J. Am. Chem. Soc.">
        <title>Fungal dirigent protein controls the stereoselectivity of multicopper oxidase-catalyzed phenol coupling in viriditoxin biosynthesis.</title>
        <authorList>
            <person name="Hu J."/>
            <person name="Li H."/>
            <person name="Chooi Y.H."/>
        </authorList>
    </citation>
    <scope>FUNCTION</scope>
    <scope>CATALYTIC ACTIVITY</scope>
    <scope>PATHWAY</scope>
</reference>
<comment type="function">
    <text evidence="4 5">Multicopper oxidase; part of the gene cluster that mediates the biosynthesis of viriditoxin, one of the 'classical' secondary metabolites produced by fungi and that has antibacterial activity (PubMed:31045362, PubMed:31304040). The first step is performed by the polyketide synthase VdtA which condenses one acetyl-CoA and 6 malonyl-CoA units to form the heptaketide monomer backbone of viriditoxin (PubMed:31304040). The product of VdtA is then O-methylated on C7 by the O-methyltransferase VdtC (PubMed:31045362, PubMed:31304040). The O-methyl group is important for the stereoselective coupling of the monomers at the final step of viriditoxin biosynthesis (PubMed:31045362, PubMed:31304040). The short-chain dehydrogenase/reductase VdtF then acts as a stereospecific reductase converting the pyrone to dihydropyrone via the reduction of the C3-C4 double bond (PubMed:31045362, PubMed:31304040). The FAD-binding monooxygenase VdtE then converts the ketone group into a methyl-ester group to yield semi-viriditoxin (PubMed:31045362, PubMed:31304040). Finally, the laccase VdtB is involved in dimerization of 2 semi-viriditoxin molecules to yield the final viriditoxin (PubMed:31045362, PubMed:31304040). VdtB is responsible for the regioselective 6,6'-coupling of semi-viriditoxin, which yields (M)-viriditoxin and (P)-viriditoxin at a ratio of 1:2 (PubMed:31045362, PubMed:31304040). The non-catalytic carboxylesterase-like protein VdtD affects the stereochemistical outcome of the coupling (PubMed:31045362, PubMed:31304040). The highly reducing polyketide synthase VdtX is not involved in viriditoxin synthesis, but might possibly play a role in the production of additional metabolites not identified yet (PubMed:31045362, PubMed:31304040).</text>
</comment>
<comment type="catalytic activity">
    <reaction evidence="4">
        <text>4 semiviriditoxin + O2 = 2 (M)-viriditoxin + 2 H2O</text>
        <dbReference type="Rhea" id="RHEA:62884"/>
        <dbReference type="ChEBI" id="CHEBI:15377"/>
        <dbReference type="ChEBI" id="CHEBI:15379"/>
        <dbReference type="ChEBI" id="CHEBI:146007"/>
        <dbReference type="ChEBI" id="CHEBI:146008"/>
    </reaction>
    <physiologicalReaction direction="left-to-right" evidence="4">
        <dbReference type="Rhea" id="RHEA:62885"/>
    </physiologicalReaction>
</comment>
<comment type="pathway">
    <text evidence="4 5">Secondary metabolite biosynthesis.</text>
</comment>
<comment type="subcellular location">
    <subcellularLocation>
        <location evidence="2">Membrane</location>
        <topology evidence="2">Single-pass membrane protein</topology>
    </subcellularLocation>
</comment>
<comment type="disruption phenotype">
    <text evidence="5">Impairs the dimerization of 2 semi-viriditoxin molecules to yield the final viriditoxin.</text>
</comment>
<comment type="similarity">
    <text evidence="7">Belongs to the multicopper oxidase family.</text>
</comment>
<dbReference type="EC" id="1.-.-.-" evidence="4"/>
<dbReference type="EMBL" id="RCNU01000014">
    <property type="protein sequence ID" value="RWQ92167.1"/>
    <property type="molecule type" value="Genomic_DNA"/>
</dbReference>
<dbReference type="SMR" id="A0A443HK79"/>
<dbReference type="STRING" id="264951.A0A443HK79"/>
<dbReference type="GlyCosmos" id="A0A443HK79">
    <property type="glycosylation" value="7 sites, No reported glycans"/>
</dbReference>
<dbReference type="VEuPathDB" id="FungiDB:C8Q69DRAFT_480050"/>
<dbReference type="Proteomes" id="UP000283841">
    <property type="component" value="Unassembled WGS sequence"/>
</dbReference>
<dbReference type="GO" id="GO:0016020">
    <property type="term" value="C:membrane"/>
    <property type="evidence" value="ECO:0007669"/>
    <property type="project" value="UniProtKB-SubCell"/>
</dbReference>
<dbReference type="GO" id="GO:0005507">
    <property type="term" value="F:copper ion binding"/>
    <property type="evidence" value="ECO:0007669"/>
    <property type="project" value="InterPro"/>
</dbReference>
<dbReference type="GO" id="GO:0016491">
    <property type="term" value="F:oxidoreductase activity"/>
    <property type="evidence" value="ECO:0000314"/>
    <property type="project" value="UniProt"/>
</dbReference>
<dbReference type="GO" id="GO:0016218">
    <property type="term" value="F:polyketide synthase activity"/>
    <property type="evidence" value="ECO:0000314"/>
    <property type="project" value="UniProt"/>
</dbReference>
<dbReference type="GO" id="GO:0140783">
    <property type="term" value="P:(M)-viriditoxin biosynthetic process"/>
    <property type="evidence" value="ECO:0000314"/>
    <property type="project" value="GO_Central"/>
</dbReference>
<dbReference type="CDD" id="cd13850">
    <property type="entry name" value="CuRO_1_Abr2_like"/>
    <property type="match status" value="1"/>
</dbReference>
<dbReference type="CDD" id="cd13876">
    <property type="entry name" value="CuRO_2_Abr2_like"/>
    <property type="match status" value="1"/>
</dbReference>
<dbReference type="CDD" id="cd13898">
    <property type="entry name" value="CuRO_3_Abr2_like"/>
    <property type="match status" value="1"/>
</dbReference>
<dbReference type="FunFam" id="2.60.40.420:FF:000036">
    <property type="entry name" value="L-ascorbate oxidase"/>
    <property type="match status" value="1"/>
</dbReference>
<dbReference type="Gene3D" id="2.60.40.420">
    <property type="entry name" value="Cupredoxins - blue copper proteins"/>
    <property type="match status" value="3"/>
</dbReference>
<dbReference type="InterPro" id="IPR011707">
    <property type="entry name" value="Cu-oxidase-like_N"/>
</dbReference>
<dbReference type="InterPro" id="IPR001117">
    <property type="entry name" value="Cu-oxidase_2nd"/>
</dbReference>
<dbReference type="InterPro" id="IPR011706">
    <property type="entry name" value="Cu-oxidase_C"/>
</dbReference>
<dbReference type="InterPro" id="IPR045087">
    <property type="entry name" value="Cu-oxidase_fam"/>
</dbReference>
<dbReference type="InterPro" id="IPR033138">
    <property type="entry name" value="Cu_oxidase_CS"/>
</dbReference>
<dbReference type="InterPro" id="IPR002355">
    <property type="entry name" value="Cu_oxidase_Cu_BS"/>
</dbReference>
<dbReference type="InterPro" id="IPR008972">
    <property type="entry name" value="Cupredoxin"/>
</dbReference>
<dbReference type="PANTHER" id="PTHR11709:SF488">
    <property type="entry name" value="LACCASE-RELATED"/>
    <property type="match status" value="1"/>
</dbReference>
<dbReference type="PANTHER" id="PTHR11709">
    <property type="entry name" value="MULTI-COPPER OXIDASE"/>
    <property type="match status" value="1"/>
</dbReference>
<dbReference type="Pfam" id="PF00394">
    <property type="entry name" value="Cu-oxidase"/>
    <property type="match status" value="1"/>
</dbReference>
<dbReference type="Pfam" id="PF07731">
    <property type="entry name" value="Cu-oxidase_2"/>
    <property type="match status" value="1"/>
</dbReference>
<dbReference type="Pfam" id="PF07732">
    <property type="entry name" value="Cu-oxidase_3"/>
    <property type="match status" value="1"/>
</dbReference>
<dbReference type="SUPFAM" id="SSF49503">
    <property type="entry name" value="Cupredoxins"/>
    <property type="match status" value="3"/>
</dbReference>
<dbReference type="PROSITE" id="PS00079">
    <property type="entry name" value="MULTICOPPER_OXIDASE1"/>
    <property type="match status" value="2"/>
</dbReference>
<dbReference type="PROSITE" id="PS00080">
    <property type="entry name" value="MULTICOPPER_OXIDASE2"/>
    <property type="match status" value="1"/>
</dbReference>
<gene>
    <name evidence="6" type="primary">VdtB</name>
    <name type="ORF">C8Q69DRAFT_480050</name>
</gene>
<accession>A0A443HK79</accession>
<protein>
    <recommendedName>
        <fullName evidence="6">Multicopper oxidase VdtB</fullName>
        <ecNumber evidence="4">1.-.-.-</ecNumber>
    </recommendedName>
    <alternativeName>
        <fullName evidence="6">Laccase vdtA</fullName>
    </alternativeName>
    <alternativeName>
        <fullName evidence="6">Viriditoxin biosynthesis cluster protein B</fullName>
    </alternativeName>
</protein>
<sequence length="685" mass="78142">MPAYLLLLACNVLLVLGAHVQRELVLTWEEGAPNGQSRQMIKTNGQFPSPTLIFDEGDDVEIVVRNYMHENTTIHWHGILMQDTPWSDGVPGLSQKPIEPGESYVYRFTAYPPGQYWYHSHSRATLLDGLYGALFIRRKPGTAGPWAMISEDPEDIAAMERASNNPHIMMLSDWDYYNSTQYKEADANSRLQIFCVDSILLNGKGSVYCPGHQWLIDKQIPFMHKSWPNDTITDKGCFPFVPSTEGPWLADGNVSAIPPGLQEGCVPYSGPTEAIEVDPADRWASVNWIGGSTFKTLQPTIDEHEMWIYEVDGHYIEPRRADTFLIWAGERYSAMIRLDKKPMDYSIRVPDGGYSQMIAAFGILRYKNGDPNARQKPDRFGVTTISKPYFDYNAWPMRDAVFLDKLDLPPWPRKVPAAHGDDMHVLYLGKANSTWEFTLSGKKKYPPDRSAYEPLLYNVNSEQAHDDDLIIRTQNGTWQDIVLQVGHSPLWPVDFPHAVHKHANKYWRIGGGQGLWNYSSVEEAMADQPESFNMVNPPYRDTFLTEFTGAMWVVLRYQVTSPGAWLLHCHFEMHLDNGMAMAILDGVDKWPHVPPEYTQGFHGFREHELPGPAGFWGLVSKILRPESLVWAGGAAVVLLSLFIGGLWRLWQRRMQGTYYVLSQEDERDRFSMDKEAWKSEETKRM</sequence>
<proteinExistence type="evidence at protein level"/>
<organism>
    <name type="scientific">Byssochlamys spectabilis</name>
    <name type="common">Paecilomyces variotii</name>
    <dbReference type="NCBI Taxonomy" id="264951"/>
    <lineage>
        <taxon>Eukaryota</taxon>
        <taxon>Fungi</taxon>
        <taxon>Dikarya</taxon>
        <taxon>Ascomycota</taxon>
        <taxon>Pezizomycotina</taxon>
        <taxon>Eurotiomycetes</taxon>
        <taxon>Eurotiomycetidae</taxon>
        <taxon>Eurotiales</taxon>
        <taxon>Thermoascaceae</taxon>
        <taxon>Paecilomyces</taxon>
    </lineage>
</organism>